<gene>
    <name evidence="1" type="primary">taw3-2</name>
    <name type="ordered locus">PYRAB02890</name>
    <name type="ORF">PAB2159</name>
</gene>
<feature type="chain" id="PRO_0000157098" description="tRNA(Phe) 7-((3-amino-3-carboxypropyl)-4-demethylwyosine(37)-N(4))-methyltransferase 2">
    <location>
        <begin position="1"/>
        <end position="206"/>
    </location>
</feature>
<comment type="function">
    <text evidence="1">S-adenosyl-L-methionine-dependent methyltransferase that acts as a component of the wyosine derivatives biosynthesis pathway. Probably methylates N-4 position of wybutosine-86 to produce wybutosine-72.</text>
</comment>
<comment type="catalytic activity">
    <reaction evidence="1">
        <text>4-demethyl-7-[(3S)-3-amino-3-carboxypropyl]wyosine(37) in tRNA(Phe) + S-adenosyl-L-methionine = 7-[(3S)-3-amino-3-carboxypropyl]wyosine(37) in tRNA(Phe) + S-adenosyl-L-homocysteine + H(+)</text>
        <dbReference type="Rhea" id="RHEA:36635"/>
        <dbReference type="Rhea" id="RHEA-COMP:10378"/>
        <dbReference type="Rhea" id="RHEA-COMP:10379"/>
        <dbReference type="ChEBI" id="CHEBI:15378"/>
        <dbReference type="ChEBI" id="CHEBI:57856"/>
        <dbReference type="ChEBI" id="CHEBI:59789"/>
        <dbReference type="ChEBI" id="CHEBI:73543"/>
        <dbReference type="ChEBI" id="CHEBI:73550"/>
        <dbReference type="EC" id="2.1.1.282"/>
    </reaction>
</comment>
<comment type="similarity">
    <text evidence="1">Belongs to the TYW3 family.</text>
</comment>
<name>TYW32_PYRAB</name>
<sequence>MKAKREALISLFTAIKEGKVDEDIIDLLMLINSIKGVYTTSSCSGRIGIIEEPSLGAKPLSRWLIKVHRPMEFEEAIDALKKANKGIIFLKSQPPILHVVAENLEMAKLLHQIGLSSGFKYTTFKVISNRYLVEINGTEYLTVPLGRDGKVLVSEEYLKFAVEIGNEMLRRGKSRLPRLYKNFQELKEKVGEDELFIALKREILGT</sequence>
<organism>
    <name type="scientific">Pyrococcus abyssi (strain GE5 / Orsay)</name>
    <dbReference type="NCBI Taxonomy" id="272844"/>
    <lineage>
        <taxon>Archaea</taxon>
        <taxon>Methanobacteriati</taxon>
        <taxon>Methanobacteriota</taxon>
        <taxon>Thermococci</taxon>
        <taxon>Thermococcales</taxon>
        <taxon>Thermococcaceae</taxon>
        <taxon>Pyrococcus</taxon>
    </lineage>
</organism>
<protein>
    <recommendedName>
        <fullName evidence="1">tRNA(Phe) 7-((3-amino-3-carboxypropyl)-4-demethylwyosine(37)-N(4))-methyltransferase 2</fullName>
        <ecNumber evidence="1">2.1.1.282</ecNumber>
    </recommendedName>
    <alternativeName>
        <fullName evidence="1">tRNA wyosine derivatives biosynthesis protein Taw3 2</fullName>
    </alternativeName>
</protein>
<accession>Q9V1Y5</accession>
<accession>G8ZHS4</accession>
<dbReference type="EC" id="2.1.1.282" evidence="1"/>
<dbReference type="EMBL" id="AJ248283">
    <property type="protein sequence ID" value="CAB49213.1"/>
    <property type="molecule type" value="Genomic_DNA"/>
</dbReference>
<dbReference type="EMBL" id="HE613800">
    <property type="protein sequence ID" value="CCE69667.1"/>
    <property type="molecule type" value="Genomic_DNA"/>
</dbReference>
<dbReference type="PIR" id="F75220">
    <property type="entry name" value="F75220"/>
</dbReference>
<dbReference type="RefSeq" id="WP_010867413.1">
    <property type="nucleotide sequence ID" value="NC_000868.1"/>
</dbReference>
<dbReference type="SMR" id="Q9V1Y5"/>
<dbReference type="STRING" id="272844.PAB2159"/>
<dbReference type="KEGG" id="pab:PAB2159"/>
<dbReference type="PATRIC" id="fig|272844.11.peg.311"/>
<dbReference type="eggNOG" id="arCOG04156">
    <property type="taxonomic scope" value="Archaea"/>
</dbReference>
<dbReference type="HOGENOM" id="CLU_047426_2_0_2"/>
<dbReference type="OrthoDB" id="19299at2157"/>
<dbReference type="PhylomeDB" id="Q9V1Y5"/>
<dbReference type="BioCyc" id="MetaCyc:MONOMER-19458"/>
<dbReference type="Proteomes" id="UP000000810">
    <property type="component" value="Chromosome"/>
</dbReference>
<dbReference type="Proteomes" id="UP000009139">
    <property type="component" value="Chromosome"/>
</dbReference>
<dbReference type="GO" id="GO:0008175">
    <property type="term" value="F:tRNA methyltransferase activity"/>
    <property type="evidence" value="ECO:0007669"/>
    <property type="project" value="InterPro"/>
</dbReference>
<dbReference type="GO" id="GO:0030488">
    <property type="term" value="P:tRNA methylation"/>
    <property type="evidence" value="ECO:0007669"/>
    <property type="project" value="InterPro"/>
</dbReference>
<dbReference type="GO" id="GO:0031591">
    <property type="term" value="P:wybutosine biosynthetic process"/>
    <property type="evidence" value="ECO:0007669"/>
    <property type="project" value="InterPro"/>
</dbReference>
<dbReference type="FunFam" id="3.30.1960.10:FF:000010">
    <property type="entry name" value="tRNA(Phe) 7-((3-amino-3-carboxypropyl)-4-demethylwyosine(37)-N(4))-methyltransferase 1"/>
    <property type="match status" value="1"/>
</dbReference>
<dbReference type="Gene3D" id="3.30.1960.10">
    <property type="entry name" value="tRNA wybutosine-synthesizing-like"/>
    <property type="match status" value="1"/>
</dbReference>
<dbReference type="HAMAP" id="MF_00266">
    <property type="entry name" value="TYW3_archaea"/>
    <property type="match status" value="1"/>
</dbReference>
<dbReference type="InterPro" id="IPR022908">
    <property type="entry name" value="Taw3"/>
</dbReference>
<dbReference type="InterPro" id="IPR003827">
    <property type="entry name" value="tRNA_yW-synthesising"/>
</dbReference>
<dbReference type="InterPro" id="IPR036602">
    <property type="entry name" value="tRNA_yW-synthesising-like_sf"/>
</dbReference>
<dbReference type="NCBIfam" id="NF003264">
    <property type="entry name" value="PRK04235.1-2"/>
    <property type="match status" value="1"/>
</dbReference>
<dbReference type="NCBIfam" id="NF003267">
    <property type="entry name" value="PRK04235.1-6"/>
    <property type="match status" value="1"/>
</dbReference>
<dbReference type="NCBIfam" id="NF047731">
    <property type="entry name" value="tRNAMtaseTaw3"/>
    <property type="match status" value="1"/>
</dbReference>
<dbReference type="PANTHER" id="PTHR48418">
    <property type="entry name" value="TRNA WYBUTOSINE-SYNTHESIZING PROTEIN 3"/>
    <property type="match status" value="1"/>
</dbReference>
<dbReference type="PANTHER" id="PTHR48418:SF1">
    <property type="entry name" value="TRNA WYBUTOSINE-SYNTHESIZING PROTEIN 3"/>
    <property type="match status" value="1"/>
</dbReference>
<dbReference type="Pfam" id="PF02676">
    <property type="entry name" value="TYW3"/>
    <property type="match status" value="1"/>
</dbReference>
<dbReference type="SUPFAM" id="SSF111278">
    <property type="entry name" value="SSo0622-like"/>
    <property type="match status" value="1"/>
</dbReference>
<reference key="1">
    <citation type="journal article" date="2003" name="Mol. Microbiol.">
        <title>An integrated analysis of the genome of the hyperthermophilic archaeon Pyrococcus abyssi.</title>
        <authorList>
            <person name="Cohen G.N."/>
            <person name="Barbe V."/>
            <person name="Flament D."/>
            <person name="Galperin M."/>
            <person name="Heilig R."/>
            <person name="Lecompte O."/>
            <person name="Poch O."/>
            <person name="Prieur D."/>
            <person name="Querellou J."/>
            <person name="Ripp R."/>
            <person name="Thierry J.-C."/>
            <person name="Van der Oost J."/>
            <person name="Weissenbach J."/>
            <person name="Zivanovic Y."/>
            <person name="Forterre P."/>
        </authorList>
    </citation>
    <scope>NUCLEOTIDE SEQUENCE [LARGE SCALE GENOMIC DNA]</scope>
    <source>
        <strain>GE5 / Orsay</strain>
    </source>
</reference>
<reference key="2">
    <citation type="journal article" date="2012" name="Curr. Microbiol.">
        <title>Re-annotation of two hyperthermophilic archaea Pyrococcus abyssi GE5 and Pyrococcus furiosus DSM 3638.</title>
        <authorList>
            <person name="Gao J."/>
            <person name="Wang J."/>
        </authorList>
    </citation>
    <scope>GENOME REANNOTATION</scope>
    <source>
        <strain>GE5 / Orsay</strain>
    </source>
</reference>
<evidence type="ECO:0000255" key="1">
    <source>
        <dbReference type="HAMAP-Rule" id="MF_00266"/>
    </source>
</evidence>
<keyword id="KW-0489">Methyltransferase</keyword>
<keyword id="KW-0949">S-adenosyl-L-methionine</keyword>
<keyword id="KW-0808">Transferase</keyword>
<keyword id="KW-0819">tRNA processing</keyword>
<proteinExistence type="inferred from homology"/>